<protein>
    <recommendedName>
        <fullName>HTH-type transcriptional regulator TcaR</fullName>
    </recommendedName>
</protein>
<sequence length="151" mass="17521">MVKHLQDHIQFLEQFINNVNALTAKMLKDLQNEYEISLEQSNVLGMLNKEPLTISEITQRQGVNKAAVSRRIKKLIDAKLVKLDKPNLNIDQRLKFITLTDKGRAYLKERNAIMTDIAQDITNDLNSEDIENVRQVLEVINHRIKTYSNHK</sequence>
<organism>
    <name type="scientific">Staphylococcus aureus (strain Newman)</name>
    <dbReference type="NCBI Taxonomy" id="426430"/>
    <lineage>
        <taxon>Bacteria</taxon>
        <taxon>Bacillati</taxon>
        <taxon>Bacillota</taxon>
        <taxon>Bacilli</taxon>
        <taxon>Bacillales</taxon>
        <taxon>Staphylococcaceae</taxon>
        <taxon>Staphylococcus</taxon>
    </lineage>
</organism>
<proteinExistence type="evidence at protein level"/>
<feature type="chain" id="PRO_0000317037" description="HTH-type transcriptional regulator TcaR">
    <location>
        <begin position="1"/>
        <end position="151"/>
    </location>
</feature>
<feature type="domain" description="HTH marR-type" evidence="1">
    <location>
        <begin position="1"/>
        <end position="142"/>
    </location>
</feature>
<feature type="DNA-binding region" description="H-T-H motif" evidence="1">
    <location>
        <begin position="54"/>
        <end position="77"/>
    </location>
</feature>
<evidence type="ECO:0000255" key="1">
    <source>
        <dbReference type="PROSITE-ProRule" id="PRU00345"/>
    </source>
</evidence>
<evidence type="ECO:0000269" key="2">
    <source>
    </source>
</evidence>
<gene>
    <name type="primary">tcaR</name>
    <name type="ordered locus">NWMN_2258</name>
</gene>
<accession>A6QJJ8</accession>
<comment type="function">
    <text evidence="2">Involved in the antibiotic teicoplanin susceptibility. Inactivation of the tcaRAB operon leads to teicoplanin resistance.</text>
</comment>
<comment type="function">
    <text evidence="2">Is a weak negative regulator of transcription of the icaADBC operon necessary for biofilm production.</text>
</comment>
<comment type="disruption phenotype">
    <text evidence="2">Cells display a 5-fold increase of the ica transcription but has no significant effect on the adherence ability nor on the amount of poly-N-acetylglucosamine polysaccharide (PNAG) produced with respect to the wild-type strain. Double deletion of icaR and tcaR increases ica transcription about 500-fold, and poly-N-acetylglucosamine polysaccharide (PNAG) synthesis about 100-fold. Adherence is significantly greater than that of the single icaR mutant.</text>
</comment>
<keyword id="KW-0238">DNA-binding</keyword>
<keyword id="KW-0678">Repressor</keyword>
<keyword id="KW-0804">Transcription</keyword>
<keyword id="KW-0805">Transcription regulation</keyword>
<dbReference type="EMBL" id="AP009351">
    <property type="protein sequence ID" value="BAF68530.1"/>
    <property type="molecule type" value="Genomic_DNA"/>
</dbReference>
<dbReference type="RefSeq" id="WP_000238542.1">
    <property type="nucleotide sequence ID" value="NZ_JBBIAE010000004.1"/>
</dbReference>
<dbReference type="SMR" id="A6QJJ8"/>
<dbReference type="KEGG" id="sae:NWMN_2258"/>
<dbReference type="HOGENOM" id="CLU_1721241_0_0_9"/>
<dbReference type="Proteomes" id="UP000006386">
    <property type="component" value="Chromosome"/>
</dbReference>
<dbReference type="GO" id="GO:0003677">
    <property type="term" value="F:DNA binding"/>
    <property type="evidence" value="ECO:0007669"/>
    <property type="project" value="UniProtKB-KW"/>
</dbReference>
<dbReference type="GO" id="GO:0003700">
    <property type="term" value="F:DNA-binding transcription factor activity"/>
    <property type="evidence" value="ECO:0007669"/>
    <property type="project" value="InterPro"/>
</dbReference>
<dbReference type="GO" id="GO:0006950">
    <property type="term" value="P:response to stress"/>
    <property type="evidence" value="ECO:0007669"/>
    <property type="project" value="TreeGrafter"/>
</dbReference>
<dbReference type="CDD" id="cd00090">
    <property type="entry name" value="HTH_ARSR"/>
    <property type="match status" value="1"/>
</dbReference>
<dbReference type="Gene3D" id="1.10.10.10">
    <property type="entry name" value="Winged helix-like DNA-binding domain superfamily/Winged helix DNA-binding domain"/>
    <property type="match status" value="1"/>
</dbReference>
<dbReference type="InterPro" id="IPR011991">
    <property type="entry name" value="ArsR-like_HTH"/>
</dbReference>
<dbReference type="InterPro" id="IPR000835">
    <property type="entry name" value="HTH_MarR-typ"/>
</dbReference>
<dbReference type="InterPro" id="IPR039422">
    <property type="entry name" value="MarR/SlyA-like"/>
</dbReference>
<dbReference type="InterPro" id="IPR036388">
    <property type="entry name" value="WH-like_DNA-bd_sf"/>
</dbReference>
<dbReference type="InterPro" id="IPR036390">
    <property type="entry name" value="WH_DNA-bd_sf"/>
</dbReference>
<dbReference type="PANTHER" id="PTHR33164:SF43">
    <property type="entry name" value="HTH-TYPE TRANSCRIPTIONAL REPRESSOR YETL"/>
    <property type="match status" value="1"/>
</dbReference>
<dbReference type="PANTHER" id="PTHR33164">
    <property type="entry name" value="TRANSCRIPTIONAL REGULATOR, MARR FAMILY"/>
    <property type="match status" value="1"/>
</dbReference>
<dbReference type="Pfam" id="PF12802">
    <property type="entry name" value="MarR_2"/>
    <property type="match status" value="1"/>
</dbReference>
<dbReference type="SMART" id="SM00347">
    <property type="entry name" value="HTH_MARR"/>
    <property type="match status" value="1"/>
</dbReference>
<dbReference type="SUPFAM" id="SSF46785">
    <property type="entry name" value="Winged helix' DNA-binding domain"/>
    <property type="match status" value="1"/>
</dbReference>
<dbReference type="PROSITE" id="PS50995">
    <property type="entry name" value="HTH_MARR_2"/>
    <property type="match status" value="1"/>
</dbReference>
<name>TCAR_STAAE</name>
<reference key="1">
    <citation type="journal article" date="2008" name="J. Bacteriol.">
        <title>Genome sequence of Staphylococcus aureus strain Newman and comparative analysis of staphylococcal genomes: polymorphism and evolution of two major pathogenicity islands.</title>
        <authorList>
            <person name="Baba T."/>
            <person name="Bae T."/>
            <person name="Schneewind O."/>
            <person name="Takeuchi F."/>
            <person name="Hiramatsu K."/>
        </authorList>
    </citation>
    <scope>NUCLEOTIDE SEQUENCE [LARGE SCALE GENOMIC DNA]</scope>
    <source>
        <strain>Newman</strain>
    </source>
</reference>
<reference key="2">
    <citation type="journal article" date="2004" name="J. Bacteriol.">
        <title>The teicoplanin-associated locus regulator (TcaR) and the intercellular adhesin locus regulator (IcaR) are transcriptional inhibitors of the ica locus in Staphylococcus aureus.</title>
        <authorList>
            <person name="Jefferson K.K."/>
            <person name="Pier D.B."/>
            <person name="Goldmann D.A."/>
            <person name="Pier G.B."/>
        </authorList>
    </citation>
    <scope>FUNCTION AS ICA OPERON REPRESSOR</scope>
    <scope>DISRUPTION PHENOTYPE</scope>
</reference>